<evidence type="ECO:0000250" key="1"/>
<evidence type="ECO:0000305" key="2"/>
<organism>
    <name type="scientific">Debaryomyces hansenii (strain ATCC 36239 / CBS 767 / BCRC 21394 / JCM 1990 / NBRC 0083 / IGC 2968)</name>
    <name type="common">Yeast</name>
    <name type="synonym">Torulaspora hansenii</name>
    <dbReference type="NCBI Taxonomy" id="284592"/>
    <lineage>
        <taxon>Eukaryota</taxon>
        <taxon>Fungi</taxon>
        <taxon>Dikarya</taxon>
        <taxon>Ascomycota</taxon>
        <taxon>Saccharomycotina</taxon>
        <taxon>Pichiomycetes</taxon>
        <taxon>Debaryomycetaceae</taxon>
        <taxon>Debaryomyces</taxon>
    </lineage>
</organism>
<feature type="chain" id="PRO_0000308565" description="Mediator of RNA polymerase II transcription subunit 20">
    <location>
        <begin position="1"/>
        <end position="236"/>
    </location>
</feature>
<proteinExistence type="inferred from homology"/>
<keyword id="KW-0010">Activator</keyword>
<keyword id="KW-0539">Nucleus</keyword>
<keyword id="KW-1185">Reference proteome</keyword>
<keyword id="KW-0804">Transcription</keyword>
<keyword id="KW-0805">Transcription regulation</keyword>
<name>MED20_DEBHA</name>
<comment type="function">
    <text evidence="1">Component of the Mediator complex, a coactivator involved in the regulated transcription of nearly all RNA polymerase II-dependent genes. Mediator functions as a bridge to convey information from gene-specific regulatory proteins to the basal RNA polymerase II transcription machinery. Mediator is recruited to promoters by direct interactions with regulatory proteins and serves as a scaffold for the assembly of a functional preinitiation complex with RNA polymerase II and the general transcription factors (By similarity).</text>
</comment>
<comment type="subunit">
    <text evidence="1">Component of the Mediator complex.</text>
</comment>
<comment type="subcellular location">
    <subcellularLocation>
        <location evidence="1">Nucleus</location>
    </subcellularLocation>
</comment>
<comment type="similarity">
    <text evidence="2">Belongs to the Mediator complex subunit 20 family.</text>
</comment>
<reference key="1">
    <citation type="journal article" date="2004" name="Nature">
        <title>Genome evolution in yeasts.</title>
        <authorList>
            <person name="Dujon B."/>
            <person name="Sherman D."/>
            <person name="Fischer G."/>
            <person name="Durrens P."/>
            <person name="Casaregola S."/>
            <person name="Lafontaine I."/>
            <person name="de Montigny J."/>
            <person name="Marck C."/>
            <person name="Neuveglise C."/>
            <person name="Talla E."/>
            <person name="Goffard N."/>
            <person name="Frangeul L."/>
            <person name="Aigle M."/>
            <person name="Anthouard V."/>
            <person name="Babour A."/>
            <person name="Barbe V."/>
            <person name="Barnay S."/>
            <person name="Blanchin S."/>
            <person name="Beckerich J.-M."/>
            <person name="Beyne E."/>
            <person name="Bleykasten C."/>
            <person name="Boisrame A."/>
            <person name="Boyer J."/>
            <person name="Cattolico L."/>
            <person name="Confanioleri F."/>
            <person name="de Daruvar A."/>
            <person name="Despons L."/>
            <person name="Fabre E."/>
            <person name="Fairhead C."/>
            <person name="Ferry-Dumazet H."/>
            <person name="Groppi A."/>
            <person name="Hantraye F."/>
            <person name="Hennequin C."/>
            <person name="Jauniaux N."/>
            <person name="Joyet P."/>
            <person name="Kachouri R."/>
            <person name="Kerrest A."/>
            <person name="Koszul R."/>
            <person name="Lemaire M."/>
            <person name="Lesur I."/>
            <person name="Ma L."/>
            <person name="Muller H."/>
            <person name="Nicaud J.-M."/>
            <person name="Nikolski M."/>
            <person name="Oztas S."/>
            <person name="Ozier-Kalogeropoulos O."/>
            <person name="Pellenz S."/>
            <person name="Potier S."/>
            <person name="Richard G.-F."/>
            <person name="Straub M.-L."/>
            <person name="Suleau A."/>
            <person name="Swennen D."/>
            <person name="Tekaia F."/>
            <person name="Wesolowski-Louvel M."/>
            <person name="Westhof E."/>
            <person name="Wirth B."/>
            <person name="Zeniou-Meyer M."/>
            <person name="Zivanovic Y."/>
            <person name="Bolotin-Fukuhara M."/>
            <person name="Thierry A."/>
            <person name="Bouchier C."/>
            <person name="Caudron B."/>
            <person name="Scarpelli C."/>
            <person name="Gaillardin C."/>
            <person name="Weissenbach J."/>
            <person name="Wincker P."/>
            <person name="Souciet J.-L."/>
        </authorList>
    </citation>
    <scope>NUCLEOTIDE SEQUENCE [LARGE SCALE GENOMIC DNA]</scope>
    <source>
        <strain>ATCC 36239 / CBS 767 / BCRC 21394 / JCM 1990 / NBRC 0083 / IGC 2968</strain>
    </source>
</reference>
<protein>
    <recommendedName>
        <fullName>Mediator of RNA polymerase II transcription subunit 20</fullName>
    </recommendedName>
    <alternativeName>
        <fullName>Mediator complex subunit 20</fullName>
    </alternativeName>
</protein>
<dbReference type="EMBL" id="CR382134">
    <property type="protein sequence ID" value="CAG85099.2"/>
    <property type="molecule type" value="Genomic_DNA"/>
</dbReference>
<dbReference type="RefSeq" id="XP_457108.2">
    <property type="nucleotide sequence ID" value="XM_457108.1"/>
</dbReference>
<dbReference type="SMR" id="Q6BXG1"/>
<dbReference type="FunCoup" id="Q6BXG1">
    <property type="interactions" value="265"/>
</dbReference>
<dbReference type="STRING" id="284592.Q6BXG1"/>
<dbReference type="GeneID" id="2913123"/>
<dbReference type="KEGG" id="dha:DEHA2B03300g"/>
<dbReference type="VEuPathDB" id="FungiDB:DEHA2B03300g"/>
<dbReference type="eggNOG" id="ENOG502RXMU">
    <property type="taxonomic scope" value="Eukaryota"/>
</dbReference>
<dbReference type="HOGENOM" id="CLU_065844_0_0_1"/>
<dbReference type="InParanoid" id="Q6BXG1"/>
<dbReference type="OMA" id="WTQRQSI"/>
<dbReference type="OrthoDB" id="1854899at2759"/>
<dbReference type="Proteomes" id="UP000000599">
    <property type="component" value="Chromosome B"/>
</dbReference>
<dbReference type="GO" id="GO:0016592">
    <property type="term" value="C:mediator complex"/>
    <property type="evidence" value="ECO:0007669"/>
    <property type="project" value="InterPro"/>
</dbReference>
<dbReference type="GO" id="GO:0003712">
    <property type="term" value="F:transcription coregulator activity"/>
    <property type="evidence" value="ECO:0007669"/>
    <property type="project" value="InterPro"/>
</dbReference>
<dbReference type="GO" id="GO:0006357">
    <property type="term" value="P:regulation of transcription by RNA polymerase II"/>
    <property type="evidence" value="ECO:0007669"/>
    <property type="project" value="InterPro"/>
</dbReference>
<dbReference type="Gene3D" id="3.30.310.180">
    <property type="match status" value="2"/>
</dbReference>
<dbReference type="InterPro" id="IPR016532">
    <property type="entry name" value="Med20"/>
</dbReference>
<dbReference type="InterPro" id="IPR013921">
    <property type="entry name" value="Mediator_Med20"/>
</dbReference>
<dbReference type="Pfam" id="PF08612">
    <property type="entry name" value="Med20"/>
    <property type="match status" value="1"/>
</dbReference>
<dbReference type="PIRSF" id="PIRSF007945">
    <property type="entry name" value="SRB2"/>
    <property type="match status" value="1"/>
</dbReference>
<sequence>MVSALILIQKATPETIVQFHDQLSNELPTLKGKWSFSFKIFRNNPYSIAPELAETSVTSSESKFLYTLAPSYLVGSCISLINKNSACVFSNVIEEESAEISNGSEFSIPDSHLHQGATTGLNDTFDFFVNQKMQSLWTQKQNIKGDGGQIYELENGSLIIRTSNVFLHGIFKGLLIQIEVENESSEHETSSLSEPFERVLSKYNIPRGKMSCNVLDSKLLDKYGDLCLQYSEILNF</sequence>
<accession>Q6BXG1</accession>
<gene>
    <name type="primary">SRB2</name>
    <name type="synonym">MED20</name>
    <name type="ordered locus">DEHA2B03300g</name>
</gene>